<proteinExistence type="inferred from homology"/>
<feature type="chain" id="PRO_0000224197" description="Chaperone protein HtpG">
    <location>
        <begin position="1"/>
        <end position="626"/>
    </location>
</feature>
<feature type="region of interest" description="A; substrate-binding" evidence="1">
    <location>
        <begin position="1"/>
        <end position="341"/>
    </location>
</feature>
<feature type="region of interest" description="B" evidence="1">
    <location>
        <begin position="342"/>
        <end position="552"/>
    </location>
</feature>
<feature type="region of interest" description="C" evidence="1">
    <location>
        <begin position="553"/>
        <end position="626"/>
    </location>
</feature>
<name>HTPG_BACLD</name>
<protein>
    <recommendedName>
        <fullName evidence="1">Chaperone protein HtpG</fullName>
    </recommendedName>
    <alternativeName>
        <fullName evidence="1">Heat shock protein HtpG</fullName>
    </alternativeName>
    <alternativeName>
        <fullName evidence="1">High temperature protein G</fullName>
    </alternativeName>
</protein>
<comment type="function">
    <text evidence="1">Molecular chaperone. Has ATPase activity.</text>
</comment>
<comment type="subunit">
    <text evidence="1">Homodimer.</text>
</comment>
<comment type="subcellular location">
    <subcellularLocation>
        <location evidence="1">Cytoplasm</location>
    </subcellularLocation>
</comment>
<comment type="similarity">
    <text evidence="1">Belongs to the heat shock protein 90 family.</text>
</comment>
<keyword id="KW-0067">ATP-binding</keyword>
<keyword id="KW-0143">Chaperone</keyword>
<keyword id="KW-0963">Cytoplasm</keyword>
<keyword id="KW-0547">Nucleotide-binding</keyword>
<keyword id="KW-1185">Reference proteome</keyword>
<keyword id="KW-0346">Stress response</keyword>
<organism>
    <name type="scientific">Bacillus licheniformis (strain ATCC 14580 / DSM 13 / JCM 2505 / CCUG 7422 / NBRC 12200 / NCIMB 9375 / NCTC 10341 / NRRL NRS-1264 / Gibson 46)</name>
    <dbReference type="NCBI Taxonomy" id="279010"/>
    <lineage>
        <taxon>Bacteria</taxon>
        <taxon>Bacillati</taxon>
        <taxon>Bacillota</taxon>
        <taxon>Bacilli</taxon>
        <taxon>Bacillales</taxon>
        <taxon>Bacillaceae</taxon>
        <taxon>Bacillus</taxon>
    </lineage>
</organism>
<dbReference type="EMBL" id="AE017333">
    <property type="protein sequence ID" value="AAU43069.1"/>
    <property type="molecule type" value="Genomic_DNA"/>
</dbReference>
<dbReference type="EMBL" id="CP000002">
    <property type="protein sequence ID" value="AAU25690.1"/>
    <property type="molecule type" value="Genomic_DNA"/>
</dbReference>
<dbReference type="RefSeq" id="WP_003177835.1">
    <property type="nucleotide sequence ID" value="NC_006322.1"/>
</dbReference>
<dbReference type="SMR" id="Q65CZ5"/>
<dbReference type="STRING" id="279010.BL00247"/>
<dbReference type="GeneID" id="92859174"/>
<dbReference type="KEGG" id="bld:BLi04256"/>
<dbReference type="KEGG" id="bli:BL00247"/>
<dbReference type="PATRIC" id="fig|279010.13.peg.4340"/>
<dbReference type="eggNOG" id="COG0326">
    <property type="taxonomic scope" value="Bacteria"/>
</dbReference>
<dbReference type="HOGENOM" id="CLU_006684_3_0_9"/>
<dbReference type="Proteomes" id="UP000000606">
    <property type="component" value="Chromosome"/>
</dbReference>
<dbReference type="GO" id="GO:0005737">
    <property type="term" value="C:cytoplasm"/>
    <property type="evidence" value="ECO:0007669"/>
    <property type="project" value="UniProtKB-SubCell"/>
</dbReference>
<dbReference type="GO" id="GO:0005524">
    <property type="term" value="F:ATP binding"/>
    <property type="evidence" value="ECO:0007669"/>
    <property type="project" value="UniProtKB-UniRule"/>
</dbReference>
<dbReference type="GO" id="GO:0016887">
    <property type="term" value="F:ATP hydrolysis activity"/>
    <property type="evidence" value="ECO:0007669"/>
    <property type="project" value="InterPro"/>
</dbReference>
<dbReference type="GO" id="GO:0140662">
    <property type="term" value="F:ATP-dependent protein folding chaperone"/>
    <property type="evidence" value="ECO:0007669"/>
    <property type="project" value="InterPro"/>
</dbReference>
<dbReference type="GO" id="GO:0051082">
    <property type="term" value="F:unfolded protein binding"/>
    <property type="evidence" value="ECO:0007669"/>
    <property type="project" value="UniProtKB-UniRule"/>
</dbReference>
<dbReference type="CDD" id="cd16927">
    <property type="entry name" value="HATPase_Hsp90-like"/>
    <property type="match status" value="1"/>
</dbReference>
<dbReference type="FunFam" id="1.20.120.790:FF:000006">
    <property type="entry name" value="Chaperone protein HtpG"/>
    <property type="match status" value="1"/>
</dbReference>
<dbReference type="FunFam" id="3.40.50.11260:FF:000008">
    <property type="entry name" value="Chaperone protein HtpG"/>
    <property type="match status" value="1"/>
</dbReference>
<dbReference type="FunFam" id="3.30.565.10:FF:000009">
    <property type="entry name" value="Molecular chaperone HtpG"/>
    <property type="match status" value="1"/>
</dbReference>
<dbReference type="Gene3D" id="3.30.230.80">
    <property type="match status" value="1"/>
</dbReference>
<dbReference type="Gene3D" id="3.40.50.11260">
    <property type="match status" value="1"/>
</dbReference>
<dbReference type="Gene3D" id="1.20.120.790">
    <property type="entry name" value="Heat shock protein 90, C-terminal domain"/>
    <property type="match status" value="1"/>
</dbReference>
<dbReference type="Gene3D" id="3.30.565.10">
    <property type="entry name" value="Histidine kinase-like ATPase, C-terminal domain"/>
    <property type="match status" value="1"/>
</dbReference>
<dbReference type="HAMAP" id="MF_00505">
    <property type="entry name" value="HSP90"/>
    <property type="match status" value="1"/>
</dbReference>
<dbReference type="InterPro" id="IPR036890">
    <property type="entry name" value="HATPase_C_sf"/>
</dbReference>
<dbReference type="InterPro" id="IPR019805">
    <property type="entry name" value="Heat_shock_protein_90_CS"/>
</dbReference>
<dbReference type="InterPro" id="IPR037196">
    <property type="entry name" value="HSP90_C"/>
</dbReference>
<dbReference type="InterPro" id="IPR001404">
    <property type="entry name" value="Hsp90_fam"/>
</dbReference>
<dbReference type="InterPro" id="IPR020575">
    <property type="entry name" value="Hsp90_N"/>
</dbReference>
<dbReference type="InterPro" id="IPR020568">
    <property type="entry name" value="Ribosomal_Su5_D2-typ_SF"/>
</dbReference>
<dbReference type="NCBIfam" id="NF003555">
    <property type="entry name" value="PRK05218.1"/>
    <property type="match status" value="1"/>
</dbReference>
<dbReference type="PANTHER" id="PTHR11528">
    <property type="entry name" value="HEAT SHOCK PROTEIN 90 FAMILY MEMBER"/>
    <property type="match status" value="1"/>
</dbReference>
<dbReference type="Pfam" id="PF13589">
    <property type="entry name" value="HATPase_c_3"/>
    <property type="match status" value="1"/>
</dbReference>
<dbReference type="Pfam" id="PF00183">
    <property type="entry name" value="HSP90"/>
    <property type="match status" value="1"/>
</dbReference>
<dbReference type="PIRSF" id="PIRSF002583">
    <property type="entry name" value="Hsp90"/>
    <property type="match status" value="1"/>
</dbReference>
<dbReference type="PRINTS" id="PR00775">
    <property type="entry name" value="HEATSHOCK90"/>
</dbReference>
<dbReference type="SMART" id="SM00387">
    <property type="entry name" value="HATPase_c"/>
    <property type="match status" value="1"/>
</dbReference>
<dbReference type="SUPFAM" id="SSF55874">
    <property type="entry name" value="ATPase domain of HSP90 chaperone/DNA topoisomerase II/histidine kinase"/>
    <property type="match status" value="1"/>
</dbReference>
<dbReference type="SUPFAM" id="SSF110942">
    <property type="entry name" value="HSP90 C-terminal domain"/>
    <property type="match status" value="1"/>
</dbReference>
<dbReference type="SUPFAM" id="SSF54211">
    <property type="entry name" value="Ribosomal protein S5 domain 2-like"/>
    <property type="match status" value="1"/>
</dbReference>
<dbReference type="PROSITE" id="PS00298">
    <property type="entry name" value="HSP90"/>
    <property type="match status" value="1"/>
</dbReference>
<evidence type="ECO:0000255" key="1">
    <source>
        <dbReference type="HAMAP-Rule" id="MF_00505"/>
    </source>
</evidence>
<gene>
    <name evidence="1" type="primary">htpG</name>
    <name type="ordered locus">BLi04256</name>
    <name type="ordered locus">BL00247</name>
</gene>
<reference key="1">
    <citation type="journal article" date="2004" name="J. Mol. Microbiol. Biotechnol.">
        <title>The complete genome sequence of Bacillus licheniformis DSM13, an organism with great industrial potential.</title>
        <authorList>
            <person name="Veith B."/>
            <person name="Herzberg C."/>
            <person name="Steckel S."/>
            <person name="Feesche J."/>
            <person name="Maurer K.H."/>
            <person name="Ehrenreich P."/>
            <person name="Baeumer S."/>
            <person name="Henne A."/>
            <person name="Liesegang H."/>
            <person name="Merkl R."/>
            <person name="Ehrenreich A."/>
            <person name="Gottschalk G."/>
        </authorList>
    </citation>
    <scope>NUCLEOTIDE SEQUENCE [LARGE SCALE GENOMIC DNA]</scope>
    <source>
        <strain>ATCC 14580 / DSM 13 / JCM 2505 / CCUG 7422 / NBRC 12200 / NCIMB 9375 / NCTC 10341 / NRRL NRS-1264 / Gibson 46</strain>
    </source>
</reference>
<reference key="2">
    <citation type="journal article" date="2004" name="Genome Biol.">
        <title>Complete genome sequence of the industrial bacterium Bacillus licheniformis and comparisons with closely related Bacillus species.</title>
        <authorList>
            <person name="Rey M.W."/>
            <person name="Ramaiya P."/>
            <person name="Nelson B.A."/>
            <person name="Brody-Karpin S.D."/>
            <person name="Zaretsky E.J."/>
            <person name="Tang M."/>
            <person name="Lopez de Leon A."/>
            <person name="Xiang H."/>
            <person name="Gusti V."/>
            <person name="Clausen I.G."/>
            <person name="Olsen P.B."/>
            <person name="Rasmussen M.D."/>
            <person name="Andersen J.T."/>
            <person name="Joergensen P.L."/>
            <person name="Larsen T.S."/>
            <person name="Sorokin A."/>
            <person name="Bolotin A."/>
            <person name="Lapidus A."/>
            <person name="Galleron N."/>
            <person name="Ehrlich S.D."/>
            <person name="Berka R.M."/>
        </authorList>
    </citation>
    <scope>NUCLEOTIDE SEQUENCE [LARGE SCALE GENOMIC DNA]</scope>
    <source>
        <strain>ATCC 14580 / DSM 13 / JCM 2505 / CCUG 7422 / NBRC 12200 / NCIMB 9375 / NCTC 10341 / NRRL NRS-1264 / Gibson 46</strain>
    </source>
</reference>
<accession>Q65CZ5</accession>
<accession>Q62NH1</accession>
<sequence length="626" mass="72031">MAKREFKAESKRLLDIMINSIYSQKEVFLRELISNASDAIDKIYYKALTDDSLTFNKDDYYIKISADKENRTLTIADTGIGMTKEELEEHLGTIAKSGSLAFKQENELKDGHDIIGQFGVGFYAAFMVADTVTVITKAHGSDEAHQWESAGADGYTIEPAAKESAGTDVILKLKENTDDENYDEYLDVHRLKAIIKTYSDFIRYPIKMDVAVNKPKEGAENEFEEVQEEQTVNSMVPIWRKNKSELKDEDYEAFYKEKHYGFDKPLAHIHTSVDGAVRYHAILFIPENIPFNYYTKEFEKGLELYSNGVLIMEKCPDLLPDHFSFVKGMVDSEDLSLNISREMLQHDRQLKLIAKNISKKIKNELKSLLKNDREKYESFYQSFGRQLKFGVYNDFGAHKDLLKDLLLFYSSKEKKLVTLEEYVSRMPEDQKYIYYASGDSYDRIEKLPQTELVSEKGYEILYFTEDIDEFAIKMLANYQEKEFKSVSSGDLGIENDDEQNQSDGDDSQYKDLFEEMKKTLDGKVKSVRASKRLKTHSVCLAADGEVTIEMEKILNAMPDNQHVKADKVLEINTNHEVFKTLQNAFDNDKDKFKLYTGLLYNQALLIEGLPIEDPVEFTNDICKVMA</sequence>